<protein>
    <recommendedName>
        <fullName evidence="1">Tryptophan 2,3-dioxygenase</fullName>
        <shortName evidence="1">TDO</shortName>
        <ecNumber evidence="1">1.13.11.11</ecNumber>
    </recommendedName>
    <alternativeName>
        <fullName evidence="1">Tryptamin 2,3-dioxygenase</fullName>
    </alternativeName>
    <alternativeName>
        <fullName evidence="1">Tryptophan oxygenase</fullName>
        <shortName evidence="1">TO</shortName>
        <shortName evidence="1">TRPO</shortName>
    </alternativeName>
    <alternativeName>
        <fullName evidence="1">Tryptophan pyrrolase</fullName>
    </alternativeName>
    <alternativeName>
        <fullName evidence="1">Tryptophanase</fullName>
    </alternativeName>
</protein>
<accession>Q84HF6</accession>
<organism>
    <name type="scientific">Pseudomonas fluorescens</name>
    <dbReference type="NCBI Taxonomy" id="294"/>
    <lineage>
        <taxon>Bacteria</taxon>
        <taxon>Pseudomonadati</taxon>
        <taxon>Pseudomonadota</taxon>
        <taxon>Gammaproteobacteria</taxon>
        <taxon>Pseudomonadales</taxon>
        <taxon>Pseudomonadaceae</taxon>
        <taxon>Pseudomonas</taxon>
    </lineage>
</organism>
<evidence type="ECO:0000255" key="1">
    <source>
        <dbReference type="HAMAP-Rule" id="MF_01972"/>
    </source>
</evidence>
<evidence type="ECO:0000269" key="2">
    <source>
    </source>
</evidence>
<proteinExistence type="inferred from homology"/>
<dbReference type="EC" id="1.13.11.11" evidence="1"/>
<dbReference type="EMBL" id="AY271621">
    <property type="protein sequence ID" value="AAL65288.1"/>
    <property type="molecule type" value="Genomic_DNA"/>
</dbReference>
<dbReference type="SMR" id="Q84HF6"/>
<dbReference type="UniPathway" id="UPA00333">
    <property type="reaction ID" value="UER00453"/>
</dbReference>
<dbReference type="UniPathway" id="UPA00981"/>
<dbReference type="GO" id="GO:0020037">
    <property type="term" value="F:heme binding"/>
    <property type="evidence" value="ECO:0000250"/>
    <property type="project" value="UniProtKB"/>
</dbReference>
<dbReference type="GO" id="GO:0046872">
    <property type="term" value="F:metal ion binding"/>
    <property type="evidence" value="ECO:0007669"/>
    <property type="project" value="UniProtKB-KW"/>
</dbReference>
<dbReference type="GO" id="GO:0004833">
    <property type="term" value="F:tryptophan 2,3-dioxygenase activity"/>
    <property type="evidence" value="ECO:0000250"/>
    <property type="project" value="UniProtKB"/>
</dbReference>
<dbReference type="GO" id="GO:0019442">
    <property type="term" value="P:L-tryptophan catabolic process to acetyl-CoA"/>
    <property type="evidence" value="ECO:0007669"/>
    <property type="project" value="TreeGrafter"/>
</dbReference>
<dbReference type="GO" id="GO:0019441">
    <property type="term" value="P:L-tryptophan catabolic process to kynurenine"/>
    <property type="evidence" value="ECO:0000250"/>
    <property type="project" value="UniProtKB"/>
</dbReference>
<dbReference type="FunFam" id="1.20.58.480:FF:000001">
    <property type="entry name" value="Tryptophan 2,3-dioxygenase"/>
    <property type="match status" value="1"/>
</dbReference>
<dbReference type="Gene3D" id="1.20.58.480">
    <property type="match status" value="1"/>
</dbReference>
<dbReference type="HAMAP" id="MF_01972">
    <property type="entry name" value="T23O"/>
    <property type="match status" value="1"/>
</dbReference>
<dbReference type="InterPro" id="IPR037217">
    <property type="entry name" value="Trp/Indoleamine_2_3_dOase-like"/>
</dbReference>
<dbReference type="InterPro" id="IPR004981">
    <property type="entry name" value="Trp_2_3_dOase"/>
</dbReference>
<dbReference type="PANTHER" id="PTHR10138">
    <property type="entry name" value="TRYPTOPHAN 2,3-DIOXYGENASE"/>
    <property type="match status" value="1"/>
</dbReference>
<dbReference type="PANTHER" id="PTHR10138:SF0">
    <property type="entry name" value="TRYPTOPHAN 2,3-DIOXYGENASE"/>
    <property type="match status" value="1"/>
</dbReference>
<dbReference type="Pfam" id="PF03301">
    <property type="entry name" value="Trp_dioxygenase"/>
    <property type="match status" value="2"/>
</dbReference>
<dbReference type="SUPFAM" id="SSF140959">
    <property type="entry name" value="Indolic compounds 2,3-dioxygenase-like"/>
    <property type="match status" value="1"/>
</dbReference>
<name>T23O_PSEFL</name>
<reference key="1">
    <citation type="journal article" date="2004" name="Mol. Microbiol.">
        <title>The Pseudomonas siderophore quinolobactin is synthesized from xanthurenic acid, an intermediate of the kynurenine pathway.</title>
        <authorList>
            <person name="Matthijs S."/>
            <person name="Baysse C."/>
            <person name="Koedam N."/>
            <person name="Tehrani K.A."/>
            <person name="Verheyden L."/>
            <person name="Budzikiewicz H."/>
            <person name="Schaefer M."/>
            <person name="Hoorelbeke B."/>
            <person name="Meyer J.-M."/>
            <person name="De Greve H."/>
            <person name="Cornelis P."/>
        </authorList>
    </citation>
    <scope>NUCLEOTIDE SEQUENCE [GENOMIC DNA]</scope>
    <scope>FUNCTION</scope>
    <scope>PATHWAY</scope>
</reference>
<sequence>MCPCPYMHQAKPQQWHDAKLDFAESMSYGDYLGLDKVLDAQVPRSQQHNEMLFIIQHQASELWMKLLLHELRHARQLIDQGQLAGSHRVLARVLRIMEQMVSSWAILATLSPMEFISFRSDLGNASGFQSYQYREIEFIFGNKNRAMLLPHQHTPQIAKNLEQCLHTPSLYDAIIQQMTRQDLPICALRLDADPSEPTRSDASVEAAWVQVYRQPERYWDLYQLGEKLMDIEDAFRQWRFRHVTVVERVIGFKKGTGGTEGVEYLRKMLGTVLFPELWSLRSSL</sequence>
<gene>
    <name evidence="1" type="primary">kynA</name>
</gene>
<comment type="function">
    <text evidence="1 2">Heme-dependent dioxygenase that catalyzes the oxidative cleavage of the L-tryptophan (L-Trp) pyrrole ring and converts L-tryptophan to N-formyl-L-kynurenine. Catalyzes the oxidative cleavage of the indole moiety (By similarity). Required for synthesis of the siderophore quinolobactin (PubMed:15066027).</text>
</comment>
<comment type="catalytic activity">
    <reaction evidence="1">
        <text>L-tryptophan + O2 = N-formyl-L-kynurenine</text>
        <dbReference type="Rhea" id="RHEA:24536"/>
        <dbReference type="ChEBI" id="CHEBI:15379"/>
        <dbReference type="ChEBI" id="CHEBI:57912"/>
        <dbReference type="ChEBI" id="CHEBI:58629"/>
        <dbReference type="EC" id="1.13.11.11"/>
    </reaction>
</comment>
<comment type="cofactor">
    <cofactor evidence="1">
        <name>heme</name>
        <dbReference type="ChEBI" id="CHEBI:30413"/>
    </cofactor>
    <text evidence="1">Binds 1 heme group per subunit.</text>
</comment>
<comment type="pathway">
    <text evidence="1 2">Amino-acid degradation; L-tryptophan degradation via kynurenine pathway; L-kynurenine from L-tryptophan: step 1/2.</text>
</comment>
<comment type="pathway">
    <text evidence="2">Siderophore biosynthesis; quinolobactin biosynthesis.</text>
</comment>
<comment type="subunit">
    <text evidence="1">Homotetramer.</text>
</comment>
<comment type="similarity">
    <text evidence="1">Belongs to the tryptophan 2,3-dioxygenase family.</text>
</comment>
<feature type="chain" id="PRO_0000360126" description="Tryptophan 2,3-dioxygenase">
    <location>
        <begin position="1"/>
        <end position="284"/>
    </location>
</feature>
<feature type="binding site" evidence="1">
    <location>
        <begin position="53"/>
        <end position="57"/>
    </location>
    <ligand>
        <name>substrate</name>
    </ligand>
</feature>
<feature type="binding site" evidence="1">
    <location>
        <position position="119"/>
    </location>
    <ligand>
        <name>substrate</name>
    </ligand>
</feature>
<feature type="binding site" description="axial binding residue" evidence="1">
    <location>
        <position position="242"/>
    </location>
    <ligand>
        <name>heme</name>
        <dbReference type="ChEBI" id="CHEBI:30413"/>
    </ligand>
    <ligandPart>
        <name>Fe</name>
        <dbReference type="ChEBI" id="CHEBI:18248"/>
    </ligandPart>
</feature>
<feature type="binding site" evidence="1">
    <location>
        <position position="256"/>
    </location>
    <ligand>
        <name>substrate</name>
    </ligand>
</feature>
<keyword id="KW-0223">Dioxygenase</keyword>
<keyword id="KW-0349">Heme</keyword>
<keyword id="KW-0408">Iron</keyword>
<keyword id="KW-0479">Metal-binding</keyword>
<keyword id="KW-0560">Oxidoreductase</keyword>
<keyword id="KW-0823">Tryptophan catabolism</keyword>